<keyword id="KW-0149">Chlorophyll biosynthesis</keyword>
<keyword id="KW-0408">Iron</keyword>
<keyword id="KW-0479">Metal-binding</keyword>
<keyword id="KW-0521">NADP</keyword>
<keyword id="KW-0560">Oxidoreductase</keyword>
<keyword id="KW-0602">Photosynthesis</keyword>
<keyword id="KW-1185">Reference proteome</keyword>
<comment type="function">
    <text evidence="1">Catalyzes the formation of the isocyclic ring in chlorophyll biosynthesis. Mediates the cyclase reaction, which results in the formation of divinylprotochlorophyllide (Pchlide) characteristic of all chlorophylls from magnesium-protoporphyrin IX 13-monomethyl ester (MgPMME).</text>
</comment>
<comment type="catalytic activity">
    <reaction evidence="1">
        <text>Mg-protoporphyrin IX 13-monomethyl ester + 3 NADPH + 3 O2 + 2 H(+) = 3,8-divinyl protochlorophyllide a + 3 NADP(+) + 5 H2O</text>
        <dbReference type="Rhea" id="RHEA:33235"/>
        <dbReference type="ChEBI" id="CHEBI:15377"/>
        <dbReference type="ChEBI" id="CHEBI:15378"/>
        <dbReference type="ChEBI" id="CHEBI:15379"/>
        <dbReference type="ChEBI" id="CHEBI:57783"/>
        <dbReference type="ChEBI" id="CHEBI:58349"/>
        <dbReference type="ChEBI" id="CHEBI:58632"/>
        <dbReference type="ChEBI" id="CHEBI:60491"/>
        <dbReference type="EC" id="1.14.13.81"/>
    </reaction>
</comment>
<comment type="cofactor">
    <cofactor evidence="1">
        <name>Fe cation</name>
        <dbReference type="ChEBI" id="CHEBI:24875"/>
    </cofactor>
</comment>
<comment type="pathway">
    <text evidence="1">Porphyrin-containing compound metabolism; chlorophyll biosynthesis (light-independent).</text>
</comment>
<comment type="similarity">
    <text evidence="1">Belongs to the AcsF family.</text>
</comment>
<gene>
    <name evidence="1" type="primary">acsF</name>
    <name type="ordered locus">Synpcc7942_1907</name>
</gene>
<name>ACSF_SYNE7</name>
<protein>
    <recommendedName>
        <fullName evidence="1">Magnesium-protoporphyrin IX monomethyl ester [oxidative] cyclase</fullName>
        <shortName evidence="1">Mg-protoporphyrin IX monomethyl ester oxidative cyclase</shortName>
        <ecNumber evidence="1">1.14.13.81</ecNumber>
    </recommendedName>
</protein>
<evidence type="ECO:0000255" key="1">
    <source>
        <dbReference type="HAMAP-Rule" id="MF_01840"/>
    </source>
</evidence>
<accession>Q31LY2</accession>
<organism>
    <name type="scientific">Synechococcus elongatus (strain ATCC 33912 / PCC 7942 / FACHB-805)</name>
    <name type="common">Anacystis nidulans R2</name>
    <dbReference type="NCBI Taxonomy" id="1140"/>
    <lineage>
        <taxon>Bacteria</taxon>
        <taxon>Bacillati</taxon>
        <taxon>Cyanobacteriota</taxon>
        <taxon>Cyanophyceae</taxon>
        <taxon>Synechococcales</taxon>
        <taxon>Synechococcaceae</taxon>
        <taxon>Synechococcus</taxon>
    </lineage>
</organism>
<sequence>MVDSLQKPELEELRPGIKAPAKETILTPRFYTTDFEAMAKMDLSPNEDELRAILEEFRADYNRKHFVRTPEFDGSAADMDPETKKVFVEFLEQSCTSEFSGFLLYKELSRRIKNRNPLLAECFELMARDEARHAGFLNKSMSDFDLQLDLGFLTANKKYTYFKPAYIFYATYLSEKIGYWRYITIFRHLEQHPEYRIYPIFKFFENWCQDENRHGDFFDALMKAQPSTVRGFVAKLWCRFFLLAVFATMYIRDVQRKEFYEALGLDAREYDRHVIAKTNETSARVFPVVLDVDHPKFYDRLETCIANNNQLAAIEATSAPKPVKVLRKLPYYLSNGLQLLKLYLVKPLESDVYQPAVR</sequence>
<proteinExistence type="inferred from homology"/>
<feature type="chain" id="PRO_1000070552" description="Magnesium-protoporphyrin IX monomethyl ester [oxidative] cyclase">
    <location>
        <begin position="1"/>
        <end position="358"/>
    </location>
</feature>
<reference key="1">
    <citation type="submission" date="2005-08" db="EMBL/GenBank/DDBJ databases">
        <title>Complete sequence of chromosome 1 of Synechococcus elongatus PCC 7942.</title>
        <authorList>
            <consortium name="US DOE Joint Genome Institute"/>
            <person name="Copeland A."/>
            <person name="Lucas S."/>
            <person name="Lapidus A."/>
            <person name="Barry K."/>
            <person name="Detter J.C."/>
            <person name="Glavina T."/>
            <person name="Hammon N."/>
            <person name="Israni S."/>
            <person name="Pitluck S."/>
            <person name="Schmutz J."/>
            <person name="Larimer F."/>
            <person name="Land M."/>
            <person name="Kyrpides N."/>
            <person name="Lykidis A."/>
            <person name="Golden S."/>
            <person name="Richardson P."/>
        </authorList>
    </citation>
    <scope>NUCLEOTIDE SEQUENCE [LARGE SCALE GENOMIC DNA]</scope>
    <source>
        <strain>ATCC 33912 / PCC 7942 / FACHB-805</strain>
    </source>
</reference>
<dbReference type="EC" id="1.14.13.81" evidence="1"/>
<dbReference type="EMBL" id="CP000100">
    <property type="protein sequence ID" value="ABB57937.1"/>
    <property type="molecule type" value="Genomic_DNA"/>
</dbReference>
<dbReference type="RefSeq" id="WP_011244498.1">
    <property type="nucleotide sequence ID" value="NZ_JACJTX010000001.1"/>
</dbReference>
<dbReference type="STRING" id="1140.Synpcc7942_1907"/>
<dbReference type="PaxDb" id="1140-Synpcc7942_1907"/>
<dbReference type="DNASU" id="3775270"/>
<dbReference type="GeneID" id="72430779"/>
<dbReference type="KEGG" id="syf:Synpcc7942_1907"/>
<dbReference type="eggNOG" id="COG1633">
    <property type="taxonomic scope" value="Bacteria"/>
</dbReference>
<dbReference type="HOGENOM" id="CLU_048037_0_0_3"/>
<dbReference type="OrthoDB" id="141643at2"/>
<dbReference type="BioCyc" id="SYNEL:SYNPCC7942_1907-MONOMER"/>
<dbReference type="UniPathway" id="UPA00670"/>
<dbReference type="Proteomes" id="UP000889800">
    <property type="component" value="Chromosome"/>
</dbReference>
<dbReference type="GO" id="GO:0005506">
    <property type="term" value="F:iron ion binding"/>
    <property type="evidence" value="ECO:0007669"/>
    <property type="project" value="UniProtKB-UniRule"/>
</dbReference>
<dbReference type="GO" id="GO:0048529">
    <property type="term" value="F:magnesium-protoporphyrin IX monomethyl ester (oxidative) cyclase activity"/>
    <property type="evidence" value="ECO:0007669"/>
    <property type="project" value="UniProtKB-UniRule"/>
</dbReference>
<dbReference type="GO" id="GO:0036068">
    <property type="term" value="P:light-independent chlorophyll biosynthetic process"/>
    <property type="evidence" value="ECO:0007669"/>
    <property type="project" value="UniProtKB-UniRule"/>
</dbReference>
<dbReference type="GO" id="GO:0015979">
    <property type="term" value="P:photosynthesis"/>
    <property type="evidence" value="ECO:0007669"/>
    <property type="project" value="UniProtKB-UniRule"/>
</dbReference>
<dbReference type="CDD" id="cd01047">
    <property type="entry name" value="ACSF"/>
    <property type="match status" value="1"/>
</dbReference>
<dbReference type="HAMAP" id="MF_01840">
    <property type="entry name" value="AcsF"/>
    <property type="match status" value="1"/>
</dbReference>
<dbReference type="InterPro" id="IPR008434">
    <property type="entry name" value="AcsF"/>
</dbReference>
<dbReference type="InterPro" id="IPR009078">
    <property type="entry name" value="Ferritin-like_SF"/>
</dbReference>
<dbReference type="InterPro" id="IPR003251">
    <property type="entry name" value="Rr_diiron-bd_dom"/>
</dbReference>
<dbReference type="NCBIfam" id="TIGR02029">
    <property type="entry name" value="AcsF"/>
    <property type="match status" value="1"/>
</dbReference>
<dbReference type="NCBIfam" id="NF010172">
    <property type="entry name" value="PRK13654.1"/>
    <property type="match status" value="1"/>
</dbReference>
<dbReference type="PANTHER" id="PTHR31053">
    <property type="entry name" value="MAGNESIUM-PROTOPORPHYRIN IX MONOMETHYL ESTER [OXIDATIVE] CYCLASE, CHLOROPLASTIC"/>
    <property type="match status" value="1"/>
</dbReference>
<dbReference type="PANTHER" id="PTHR31053:SF2">
    <property type="entry name" value="MAGNESIUM-PROTOPORPHYRIN IX MONOMETHYL ESTER [OXIDATIVE] CYCLASE, CHLOROPLASTIC"/>
    <property type="match status" value="1"/>
</dbReference>
<dbReference type="Pfam" id="PF02915">
    <property type="entry name" value="Rubrerythrin"/>
    <property type="match status" value="1"/>
</dbReference>
<dbReference type="SUPFAM" id="SSF47240">
    <property type="entry name" value="Ferritin-like"/>
    <property type="match status" value="1"/>
</dbReference>